<sequence>MDNKIVYVVSDSVGETADLVVRAAMGQFPFAPDIRRVPYVEDTGTLKEVISIAKSNQALICFTLVKPDMRQYLVTEAAKEGVEAYDIIGPLIDQIEEITGQVPRYEPGVVRRLDEEYFKKIEAIEFAVKYDDGRDARGILKADIVLIGISRTSKTPLSQYLAHNKRLKVANVPLVPEVDPPEELYQVAKEKCFGLKITPEKLNHIRKERLKSLGLSDGATYANINRIKEEIDHFENVVSKINCQVIDVSNKAIEETANIIVNAVQNQKMF</sequence>
<organism>
    <name type="scientific">Bacillus cereus (strain ATCC 10987 / NRS 248)</name>
    <dbReference type="NCBI Taxonomy" id="222523"/>
    <lineage>
        <taxon>Bacteria</taxon>
        <taxon>Bacillati</taxon>
        <taxon>Bacillota</taxon>
        <taxon>Bacilli</taxon>
        <taxon>Bacillales</taxon>
        <taxon>Bacillaceae</taxon>
        <taxon>Bacillus</taxon>
        <taxon>Bacillus cereus group</taxon>
    </lineage>
</organism>
<accession>Q730P0</accession>
<reference key="1">
    <citation type="journal article" date="2004" name="Nucleic Acids Res.">
        <title>The genome sequence of Bacillus cereus ATCC 10987 reveals metabolic adaptations and a large plasmid related to Bacillus anthracis pXO1.</title>
        <authorList>
            <person name="Rasko D.A."/>
            <person name="Ravel J."/>
            <person name="Oekstad O.A."/>
            <person name="Helgason E."/>
            <person name="Cer R.Z."/>
            <person name="Jiang L."/>
            <person name="Shores K.A."/>
            <person name="Fouts D.E."/>
            <person name="Tourasse N.J."/>
            <person name="Angiuoli S.V."/>
            <person name="Kolonay J.F."/>
            <person name="Nelson W.C."/>
            <person name="Kolstoe A.-B."/>
            <person name="Fraser C.M."/>
            <person name="Read T.D."/>
        </authorList>
    </citation>
    <scope>NUCLEOTIDE SEQUENCE [LARGE SCALE GENOMIC DNA]</scope>
    <source>
        <strain>ATCC 10987 / NRS 248</strain>
    </source>
</reference>
<gene>
    <name type="ordered locus">BCE_4376</name>
</gene>
<evidence type="ECO:0000255" key="1">
    <source>
        <dbReference type="HAMAP-Rule" id="MF_00921"/>
    </source>
</evidence>
<feature type="chain" id="PRO_0000196624" description="Putative pyruvate, phosphate dikinase regulatory protein">
    <location>
        <begin position="1"/>
        <end position="270"/>
    </location>
</feature>
<feature type="binding site" evidence="1">
    <location>
        <begin position="148"/>
        <end position="155"/>
    </location>
    <ligand>
        <name>ADP</name>
        <dbReference type="ChEBI" id="CHEBI:456216"/>
    </ligand>
</feature>
<keyword id="KW-0418">Kinase</keyword>
<keyword id="KW-0547">Nucleotide-binding</keyword>
<keyword id="KW-0723">Serine/threonine-protein kinase</keyword>
<keyword id="KW-0808">Transferase</keyword>
<protein>
    <recommendedName>
        <fullName evidence="1">Putative pyruvate, phosphate dikinase regulatory protein</fullName>
        <shortName evidence="1">PPDK regulatory protein</shortName>
        <ecNumber evidence="1">2.7.11.32</ecNumber>
        <ecNumber evidence="1">2.7.4.27</ecNumber>
    </recommendedName>
</protein>
<proteinExistence type="inferred from homology"/>
<dbReference type="EC" id="2.7.11.32" evidence="1"/>
<dbReference type="EC" id="2.7.4.27" evidence="1"/>
<dbReference type="EMBL" id="AE017194">
    <property type="protein sequence ID" value="AAS43277.1"/>
    <property type="molecule type" value="Genomic_DNA"/>
</dbReference>
<dbReference type="SMR" id="Q730P0"/>
<dbReference type="KEGG" id="bca:BCE_4376"/>
<dbReference type="HOGENOM" id="CLU_046206_2_1_9"/>
<dbReference type="Proteomes" id="UP000002527">
    <property type="component" value="Chromosome"/>
</dbReference>
<dbReference type="GO" id="GO:0043531">
    <property type="term" value="F:ADP binding"/>
    <property type="evidence" value="ECO:0007669"/>
    <property type="project" value="UniProtKB-UniRule"/>
</dbReference>
<dbReference type="GO" id="GO:0005524">
    <property type="term" value="F:ATP binding"/>
    <property type="evidence" value="ECO:0007669"/>
    <property type="project" value="InterPro"/>
</dbReference>
<dbReference type="GO" id="GO:0016776">
    <property type="term" value="F:phosphotransferase activity, phosphate group as acceptor"/>
    <property type="evidence" value="ECO:0007669"/>
    <property type="project" value="UniProtKB-UniRule"/>
</dbReference>
<dbReference type="GO" id="GO:0004674">
    <property type="term" value="F:protein serine/threonine kinase activity"/>
    <property type="evidence" value="ECO:0007669"/>
    <property type="project" value="UniProtKB-UniRule"/>
</dbReference>
<dbReference type="HAMAP" id="MF_00921">
    <property type="entry name" value="PDRP"/>
    <property type="match status" value="1"/>
</dbReference>
<dbReference type="InterPro" id="IPR005177">
    <property type="entry name" value="Kinase-pyrophosphorylase"/>
</dbReference>
<dbReference type="InterPro" id="IPR026565">
    <property type="entry name" value="PPDK_reg"/>
</dbReference>
<dbReference type="NCBIfam" id="NF003742">
    <property type="entry name" value="PRK05339.1"/>
    <property type="match status" value="1"/>
</dbReference>
<dbReference type="PANTHER" id="PTHR31756">
    <property type="entry name" value="PYRUVATE, PHOSPHATE DIKINASE REGULATORY PROTEIN 1, CHLOROPLASTIC"/>
    <property type="match status" value="1"/>
</dbReference>
<dbReference type="PANTHER" id="PTHR31756:SF3">
    <property type="entry name" value="PYRUVATE, PHOSPHATE DIKINASE REGULATORY PROTEIN 1, CHLOROPLASTIC"/>
    <property type="match status" value="1"/>
</dbReference>
<dbReference type="Pfam" id="PF03618">
    <property type="entry name" value="Kinase-PPPase"/>
    <property type="match status" value="1"/>
</dbReference>
<comment type="function">
    <text evidence="1">Bifunctional serine/threonine kinase and phosphorylase involved in the regulation of the pyruvate, phosphate dikinase (PPDK) by catalyzing its phosphorylation/dephosphorylation.</text>
</comment>
<comment type="catalytic activity">
    <reaction evidence="1">
        <text>N(tele)-phospho-L-histidyl/L-threonyl-[pyruvate, phosphate dikinase] + ADP = N(tele)-phospho-L-histidyl/O-phospho-L-threonyl-[pyruvate, phosphate dikinase] + AMP + H(+)</text>
        <dbReference type="Rhea" id="RHEA:43692"/>
        <dbReference type="Rhea" id="RHEA-COMP:10650"/>
        <dbReference type="Rhea" id="RHEA-COMP:10651"/>
        <dbReference type="ChEBI" id="CHEBI:15378"/>
        <dbReference type="ChEBI" id="CHEBI:30013"/>
        <dbReference type="ChEBI" id="CHEBI:61977"/>
        <dbReference type="ChEBI" id="CHEBI:83586"/>
        <dbReference type="ChEBI" id="CHEBI:456215"/>
        <dbReference type="ChEBI" id="CHEBI:456216"/>
        <dbReference type="EC" id="2.7.11.32"/>
    </reaction>
</comment>
<comment type="catalytic activity">
    <reaction evidence="1">
        <text>N(tele)-phospho-L-histidyl/O-phospho-L-threonyl-[pyruvate, phosphate dikinase] + phosphate + H(+) = N(tele)-phospho-L-histidyl/L-threonyl-[pyruvate, phosphate dikinase] + diphosphate</text>
        <dbReference type="Rhea" id="RHEA:43696"/>
        <dbReference type="Rhea" id="RHEA-COMP:10650"/>
        <dbReference type="Rhea" id="RHEA-COMP:10651"/>
        <dbReference type="ChEBI" id="CHEBI:15378"/>
        <dbReference type="ChEBI" id="CHEBI:30013"/>
        <dbReference type="ChEBI" id="CHEBI:33019"/>
        <dbReference type="ChEBI" id="CHEBI:43474"/>
        <dbReference type="ChEBI" id="CHEBI:61977"/>
        <dbReference type="ChEBI" id="CHEBI:83586"/>
        <dbReference type="EC" id="2.7.4.27"/>
    </reaction>
</comment>
<comment type="similarity">
    <text evidence="1">Belongs to the pyruvate, phosphate/water dikinase regulatory protein family. PDRP subfamily.</text>
</comment>
<name>PDRP_BACC1</name>